<accession>A1EA27</accession>
<feature type="chain" id="PRO_0000275481" description="Cytochrome b6-f complex subunit 5">
    <location>
        <begin position="1"/>
        <end position="37"/>
    </location>
</feature>
<feature type="transmembrane region" description="Helical" evidence="1">
    <location>
        <begin position="5"/>
        <end position="25"/>
    </location>
</feature>
<sequence length="37" mass="4170">MIEVFLFGIVLGLIPITLAGLFVTAYLQYRRGDQLDL</sequence>
<keyword id="KW-0150">Chloroplast</keyword>
<keyword id="KW-0249">Electron transport</keyword>
<keyword id="KW-0472">Membrane</keyword>
<keyword id="KW-0602">Photosynthesis</keyword>
<keyword id="KW-0934">Plastid</keyword>
<keyword id="KW-0793">Thylakoid</keyword>
<keyword id="KW-0812">Transmembrane</keyword>
<keyword id="KW-1133">Transmembrane helix</keyword>
<keyword id="KW-0813">Transport</keyword>
<name>PETG_AGRST</name>
<comment type="function">
    <text evidence="1">Component of the cytochrome b6-f complex, which mediates electron transfer between photosystem II (PSII) and photosystem I (PSI), cyclic electron flow around PSI, and state transitions. PetG is required for either the stability or assembly of the cytochrome b6-f complex.</text>
</comment>
<comment type="subunit">
    <text evidence="1">The 4 large subunits of the cytochrome b6-f complex are cytochrome b6, subunit IV (17 kDa polypeptide, PetD), cytochrome f and the Rieske protein, while the 4 small subunits are PetG, PetL, PetM and PetN. The complex functions as a dimer.</text>
</comment>
<comment type="subcellular location">
    <subcellularLocation>
        <location evidence="1">Plastid</location>
        <location evidence="1">Chloroplast thylakoid membrane</location>
        <topology evidence="1">Single-pass membrane protein</topology>
    </subcellularLocation>
</comment>
<comment type="similarity">
    <text evidence="1">Belongs to the PetG family.</text>
</comment>
<protein>
    <recommendedName>
        <fullName evidence="1">Cytochrome b6-f complex subunit 5</fullName>
    </recommendedName>
    <alternativeName>
        <fullName evidence="1">Cytochrome b6-f complex subunit PetG</fullName>
    </alternativeName>
    <alternativeName>
        <fullName evidence="1">Cytochrome b6-f complex subunit V</fullName>
    </alternativeName>
</protein>
<proteinExistence type="inferred from homology"/>
<dbReference type="EMBL" id="EF115543">
    <property type="protein sequence ID" value="ABK79599.1"/>
    <property type="molecule type" value="Genomic_DNA"/>
</dbReference>
<dbReference type="RefSeq" id="YP_874755.1">
    <property type="nucleotide sequence ID" value="NC_008591.1"/>
</dbReference>
<dbReference type="SMR" id="A1EA27"/>
<dbReference type="GeneID" id="4524997"/>
<dbReference type="GO" id="GO:0009535">
    <property type="term" value="C:chloroplast thylakoid membrane"/>
    <property type="evidence" value="ECO:0007669"/>
    <property type="project" value="UniProtKB-SubCell"/>
</dbReference>
<dbReference type="GO" id="GO:0009512">
    <property type="term" value="C:cytochrome b6f complex"/>
    <property type="evidence" value="ECO:0007669"/>
    <property type="project" value="InterPro"/>
</dbReference>
<dbReference type="GO" id="GO:0045158">
    <property type="term" value="F:electron transporter, transferring electrons within cytochrome b6/f complex of photosystem II activity"/>
    <property type="evidence" value="ECO:0007669"/>
    <property type="project" value="UniProtKB-UniRule"/>
</dbReference>
<dbReference type="GO" id="GO:0017004">
    <property type="term" value="P:cytochrome complex assembly"/>
    <property type="evidence" value="ECO:0007669"/>
    <property type="project" value="UniProtKB-UniRule"/>
</dbReference>
<dbReference type="GO" id="GO:0015979">
    <property type="term" value="P:photosynthesis"/>
    <property type="evidence" value="ECO:0007669"/>
    <property type="project" value="UniProtKB-KW"/>
</dbReference>
<dbReference type="HAMAP" id="MF_00432">
    <property type="entry name" value="Cytb6_f_PetG"/>
    <property type="match status" value="1"/>
</dbReference>
<dbReference type="InterPro" id="IPR003683">
    <property type="entry name" value="Cyt_6/f_cplx_su5"/>
</dbReference>
<dbReference type="InterPro" id="IPR036099">
    <property type="entry name" value="Cyt_6/f_cplx_su5_sf"/>
</dbReference>
<dbReference type="NCBIfam" id="NF001907">
    <property type="entry name" value="PRK00665.1"/>
    <property type="match status" value="1"/>
</dbReference>
<dbReference type="Pfam" id="PF02529">
    <property type="entry name" value="PetG"/>
    <property type="match status" value="1"/>
</dbReference>
<dbReference type="PIRSF" id="PIRSF000034">
    <property type="entry name" value="Cyt_b6-f_V"/>
    <property type="match status" value="1"/>
</dbReference>
<dbReference type="SUPFAM" id="SSF103446">
    <property type="entry name" value="PetG subunit of the cytochrome b6f complex"/>
    <property type="match status" value="1"/>
</dbReference>
<reference key="1">
    <citation type="journal article" date="2007" name="Theor. Appl. Genet.">
        <title>Complete chloroplast genome sequences of Hordeum vulgare, Sorghum bicolor and Agrostis stolonifera, and comparative analyses with other grass genomes.</title>
        <authorList>
            <person name="Saski C."/>
            <person name="Lee S.-B."/>
            <person name="Fjellheim S."/>
            <person name="Guda C."/>
            <person name="Jansen R.K."/>
            <person name="Luo H."/>
            <person name="Tomkins J."/>
            <person name="Rognli O.A."/>
            <person name="Daniell H."/>
            <person name="Clarke J.L."/>
        </authorList>
    </citation>
    <scope>NUCLEOTIDE SEQUENCE [LARGE SCALE GENOMIC DNA]</scope>
    <source>
        <strain>cv. Penn A-4</strain>
    </source>
</reference>
<gene>
    <name evidence="1" type="primary">petG</name>
</gene>
<organism>
    <name type="scientific">Agrostis stolonifera</name>
    <name type="common">Creeping bentgrass</name>
    <dbReference type="NCBI Taxonomy" id="63632"/>
    <lineage>
        <taxon>Eukaryota</taxon>
        <taxon>Viridiplantae</taxon>
        <taxon>Streptophyta</taxon>
        <taxon>Embryophyta</taxon>
        <taxon>Tracheophyta</taxon>
        <taxon>Spermatophyta</taxon>
        <taxon>Magnoliopsida</taxon>
        <taxon>Liliopsida</taxon>
        <taxon>Poales</taxon>
        <taxon>Poaceae</taxon>
        <taxon>BOP clade</taxon>
        <taxon>Pooideae</taxon>
        <taxon>Poodae</taxon>
        <taxon>Poeae</taxon>
        <taxon>Poeae Chloroplast Group 1 (Aveneae type)</taxon>
        <taxon>Agrostidodinae</taxon>
        <taxon>Agrostidinae</taxon>
        <taxon>Agrostis</taxon>
    </lineage>
</organism>
<evidence type="ECO:0000255" key="1">
    <source>
        <dbReference type="HAMAP-Rule" id="MF_00432"/>
    </source>
</evidence>
<geneLocation type="chloroplast"/>